<protein>
    <recommendedName>
        <fullName>Adenosylhomocysteinase</fullName>
        <shortName>AdoHcyase</shortName>
        <ecNumber>3.13.2.1</ecNumber>
    </recommendedName>
    <alternativeName>
        <fullName>Cytokinin-binding protein CBP57</fullName>
    </alternativeName>
    <alternativeName>
        <fullName>S-adenosyl-L-homocysteine hydrolase</fullName>
    </alternativeName>
</protein>
<name>SAHH_NICSY</name>
<organism>
    <name type="scientific">Nicotiana sylvestris</name>
    <name type="common">Wood tobacco</name>
    <name type="synonym">South American tobacco</name>
    <dbReference type="NCBI Taxonomy" id="4096"/>
    <lineage>
        <taxon>Eukaryota</taxon>
        <taxon>Viridiplantae</taxon>
        <taxon>Streptophyta</taxon>
        <taxon>Embryophyta</taxon>
        <taxon>Tracheophyta</taxon>
        <taxon>Spermatophyta</taxon>
        <taxon>Magnoliopsida</taxon>
        <taxon>eudicotyledons</taxon>
        <taxon>Gunneridae</taxon>
        <taxon>Pentapetalae</taxon>
        <taxon>asterids</taxon>
        <taxon>lamiids</taxon>
        <taxon>Solanales</taxon>
        <taxon>Solanaceae</taxon>
        <taxon>Nicotianoideae</taxon>
        <taxon>Nicotianeae</taxon>
        <taxon>Nicotiana</taxon>
    </lineage>
</organism>
<feature type="chain" id="PRO_0000116927" description="Adenosylhomocysteinase">
    <location>
        <begin position="1"/>
        <end position="485"/>
    </location>
</feature>
<feature type="binding site" evidence="1">
    <location>
        <position position="64"/>
    </location>
    <ligand>
        <name>substrate</name>
    </ligand>
</feature>
<feature type="binding site" evidence="1">
    <location>
        <position position="139"/>
    </location>
    <ligand>
        <name>substrate</name>
    </ligand>
</feature>
<feature type="binding site" evidence="1">
    <location>
        <position position="205"/>
    </location>
    <ligand>
        <name>substrate</name>
    </ligand>
</feature>
<feature type="binding site" evidence="1">
    <location>
        <begin position="206"/>
        <end position="208"/>
    </location>
    <ligand>
        <name>NAD(+)</name>
        <dbReference type="ChEBI" id="CHEBI:57540"/>
    </ligand>
</feature>
<feature type="binding site" evidence="1">
    <location>
        <position position="235"/>
    </location>
    <ligand>
        <name>substrate</name>
    </ligand>
</feature>
<feature type="binding site" evidence="1">
    <location>
        <position position="239"/>
    </location>
    <ligand>
        <name>substrate</name>
    </ligand>
</feature>
<feature type="binding site" evidence="1">
    <location>
        <position position="240"/>
    </location>
    <ligand>
        <name>NAD(+)</name>
        <dbReference type="ChEBI" id="CHEBI:57540"/>
    </ligand>
</feature>
<feature type="binding site" evidence="1">
    <location>
        <begin position="269"/>
        <end position="274"/>
    </location>
    <ligand>
        <name>NAD(+)</name>
        <dbReference type="ChEBI" id="CHEBI:57540"/>
    </ligand>
</feature>
<feature type="binding site" evidence="1">
    <location>
        <position position="292"/>
    </location>
    <ligand>
        <name>NAD(+)</name>
        <dbReference type="ChEBI" id="CHEBI:57540"/>
    </ligand>
</feature>
<feature type="binding site" evidence="1">
    <location>
        <position position="327"/>
    </location>
    <ligand>
        <name>NAD(+)</name>
        <dbReference type="ChEBI" id="CHEBI:57540"/>
    </ligand>
</feature>
<feature type="binding site" evidence="1">
    <location>
        <begin position="348"/>
        <end position="350"/>
    </location>
    <ligand>
        <name>NAD(+)</name>
        <dbReference type="ChEBI" id="CHEBI:57540"/>
    </ligand>
</feature>
<feature type="binding site" evidence="1">
    <location>
        <position position="397"/>
    </location>
    <ligand>
        <name>NAD(+)</name>
        <dbReference type="ChEBI" id="CHEBI:57540"/>
    </ligand>
</feature>
<proteinExistence type="evidence at transcript level"/>
<keyword id="KW-0378">Hydrolase</keyword>
<keyword id="KW-0520">NAD</keyword>
<keyword id="KW-0554">One-carbon metabolism</keyword>
<keyword id="KW-1185">Reference proteome</keyword>
<evidence type="ECO:0000250" key="1"/>
<evidence type="ECO:0000305" key="2"/>
<dbReference type="EC" id="3.13.2.1"/>
<dbReference type="EMBL" id="D16138">
    <property type="protein sequence ID" value="BAA03709.1"/>
    <property type="molecule type" value="mRNA"/>
</dbReference>
<dbReference type="RefSeq" id="NP_001289538.1">
    <property type="nucleotide sequence ID" value="NM_001302609.1"/>
</dbReference>
<dbReference type="RefSeq" id="XP_009800926.1">
    <property type="nucleotide sequence ID" value="XM_009802624.1"/>
</dbReference>
<dbReference type="SMR" id="P68172"/>
<dbReference type="STRING" id="4096.P68172"/>
<dbReference type="GeneID" id="104246750"/>
<dbReference type="KEGG" id="nsy:104246750"/>
<dbReference type="eggNOG" id="KOG1370">
    <property type="taxonomic scope" value="Eukaryota"/>
</dbReference>
<dbReference type="OrthoDB" id="4724at4085"/>
<dbReference type="UniPathway" id="UPA00314">
    <property type="reaction ID" value="UER00076"/>
</dbReference>
<dbReference type="Proteomes" id="UP000189701">
    <property type="component" value="Unplaced"/>
</dbReference>
<dbReference type="GO" id="GO:0005829">
    <property type="term" value="C:cytosol"/>
    <property type="evidence" value="ECO:0007669"/>
    <property type="project" value="TreeGrafter"/>
</dbReference>
<dbReference type="GO" id="GO:0004013">
    <property type="term" value="F:adenosylhomocysteinase activity"/>
    <property type="evidence" value="ECO:0007669"/>
    <property type="project" value="RHEA"/>
</dbReference>
<dbReference type="GO" id="GO:0006730">
    <property type="term" value="P:one-carbon metabolic process"/>
    <property type="evidence" value="ECO:0007669"/>
    <property type="project" value="UniProtKB-KW"/>
</dbReference>
<dbReference type="GO" id="GO:0033353">
    <property type="term" value="P:S-adenosylmethionine cycle"/>
    <property type="evidence" value="ECO:0007669"/>
    <property type="project" value="TreeGrafter"/>
</dbReference>
<dbReference type="CDD" id="cd00401">
    <property type="entry name" value="SAHH"/>
    <property type="match status" value="1"/>
</dbReference>
<dbReference type="FunFam" id="3.40.50.720:FF:000004">
    <property type="entry name" value="Adenosylhomocysteinase"/>
    <property type="match status" value="1"/>
</dbReference>
<dbReference type="Gene3D" id="3.40.50.1480">
    <property type="entry name" value="Adenosylhomocysteinase-like"/>
    <property type="match status" value="1"/>
</dbReference>
<dbReference type="Gene3D" id="3.40.50.720">
    <property type="entry name" value="NAD(P)-binding Rossmann-like Domain"/>
    <property type="match status" value="1"/>
</dbReference>
<dbReference type="HAMAP" id="MF_00563">
    <property type="entry name" value="AdoHcyase"/>
    <property type="match status" value="1"/>
</dbReference>
<dbReference type="InterPro" id="IPR042172">
    <property type="entry name" value="Adenosylhomocyst_ase-like_sf"/>
</dbReference>
<dbReference type="InterPro" id="IPR000043">
    <property type="entry name" value="Adenosylhomocysteinase-like"/>
</dbReference>
<dbReference type="InterPro" id="IPR015878">
    <property type="entry name" value="Ado_hCys_hydrolase_NAD-bd"/>
</dbReference>
<dbReference type="InterPro" id="IPR036291">
    <property type="entry name" value="NAD(P)-bd_dom_sf"/>
</dbReference>
<dbReference type="InterPro" id="IPR020082">
    <property type="entry name" value="S-Ado-L-homoCys_hydrolase_CS"/>
</dbReference>
<dbReference type="NCBIfam" id="TIGR00936">
    <property type="entry name" value="ahcY"/>
    <property type="match status" value="1"/>
</dbReference>
<dbReference type="NCBIfam" id="NF004005">
    <property type="entry name" value="PRK05476.2-3"/>
    <property type="match status" value="1"/>
</dbReference>
<dbReference type="PANTHER" id="PTHR23420">
    <property type="entry name" value="ADENOSYLHOMOCYSTEINASE"/>
    <property type="match status" value="1"/>
</dbReference>
<dbReference type="PANTHER" id="PTHR23420:SF0">
    <property type="entry name" value="ADENOSYLHOMOCYSTEINASE"/>
    <property type="match status" value="1"/>
</dbReference>
<dbReference type="Pfam" id="PF05221">
    <property type="entry name" value="AdoHcyase"/>
    <property type="match status" value="1"/>
</dbReference>
<dbReference type="Pfam" id="PF00670">
    <property type="entry name" value="AdoHcyase_NAD"/>
    <property type="match status" value="1"/>
</dbReference>
<dbReference type="PIRSF" id="PIRSF001109">
    <property type="entry name" value="Ad_hcy_hydrolase"/>
    <property type="match status" value="1"/>
</dbReference>
<dbReference type="SMART" id="SM00996">
    <property type="entry name" value="AdoHcyase"/>
    <property type="match status" value="1"/>
</dbReference>
<dbReference type="SMART" id="SM00997">
    <property type="entry name" value="AdoHcyase_NAD"/>
    <property type="match status" value="1"/>
</dbReference>
<dbReference type="SUPFAM" id="SSF52283">
    <property type="entry name" value="Formate/glycerate dehydrogenase catalytic domain-like"/>
    <property type="match status" value="2"/>
</dbReference>
<dbReference type="SUPFAM" id="SSF51735">
    <property type="entry name" value="NAD(P)-binding Rossmann-fold domains"/>
    <property type="match status" value="1"/>
</dbReference>
<dbReference type="PROSITE" id="PS00738">
    <property type="entry name" value="ADOHCYASE_1"/>
    <property type="match status" value="1"/>
</dbReference>
<dbReference type="PROSITE" id="PS00739">
    <property type="entry name" value="ADOHCYASE_2"/>
    <property type="match status" value="1"/>
</dbReference>
<gene>
    <name type="primary">SAHH</name>
</gene>
<sequence length="485" mass="53104">MALLVEKTTSGREYKVKDMSQADFGRLEIELAEVEMPGLMACRTEFGPSQPFKGAKITGSLHMTIQTAVLIETLTALGAEVRWCSCNIFSTQDHAAAAIARDSAAVFAWKGETLQEYWWCTERALDWGPGGGPDLIVDDGGDATLLIHEGVKAEEEFAKNGTIPDPNSTDNAEFQLVLTIIKESLKTDPLKYTKMKERLVGVSEETTTGVKRLYQMQANGTLLFPAINVNDSVTKSKFDNLYGCRHSLPDGLMRATDVMIAGKVALVAGYGDVGKGCAAALKQAGARVIVTEIDPICALQATMEGLQVLTLEDVVSDVDIFVTTTGNKDIIMVDHMRKMKNNAIVCNIGHFDNEIDMLGLETYPGVKRITIKPQTDRWVFPDTNSGIIVLAEGRLMNLGCATGHPSFVMSCSFTNQVIAQLELWNEKSSGKYEKKVYVLPKHLDEKVAALHLGKLGAKLTKLSKDQADYISVPVEGPYKPAHYRY</sequence>
<accession>P68172</accession>
<accession>P50248</accession>
<reference key="1">
    <citation type="journal article" date="1993" name="Plant Cell Physiol.">
        <title>A cDNA encoding the 57 kDa subunit of a cytokinin-binding protein complex from tobacco: the subunit has high homology to S-adenosyl-L-homocystein hydrolase.</title>
        <authorList>
            <person name="Mitsui S."/>
            <person name="Wakasugi T."/>
            <person name="Sugiura M."/>
        </authorList>
    </citation>
    <scope>NUCLEOTIDE SEQUENCE [MRNA]</scope>
</reference>
<comment type="function">
    <text evidence="1">Adenosylhomocysteine is a competitive inhibitor of S-adenosyl-L-methionine-dependent methyl transferase reactions; therefore adenosylhomocysteinase may play a key role in the control of methylations via regulation of the intracellular concentration of adenosylhomocysteine.</text>
</comment>
<comment type="catalytic activity">
    <reaction>
        <text>S-adenosyl-L-homocysteine + H2O = L-homocysteine + adenosine</text>
        <dbReference type="Rhea" id="RHEA:21708"/>
        <dbReference type="ChEBI" id="CHEBI:15377"/>
        <dbReference type="ChEBI" id="CHEBI:16335"/>
        <dbReference type="ChEBI" id="CHEBI:57856"/>
        <dbReference type="ChEBI" id="CHEBI:58199"/>
        <dbReference type="EC" id="3.13.2.1"/>
    </reaction>
</comment>
<comment type="cofactor">
    <cofactor evidence="1">
        <name>NAD(+)</name>
        <dbReference type="ChEBI" id="CHEBI:57540"/>
    </cofactor>
    <text evidence="1">Binds 1 NAD(+) per subunit.</text>
</comment>
<comment type="pathway">
    <text>Amino-acid biosynthesis; L-homocysteine biosynthesis; L-homocysteine from S-adenosyl-L-homocysteine: step 1/1.</text>
</comment>
<comment type="similarity">
    <text evidence="2">Belongs to the adenosylhomocysteinase family.</text>
</comment>